<dbReference type="EC" id="2.1.2.1" evidence="1"/>
<dbReference type="EMBL" id="CP000716">
    <property type="protein sequence ID" value="ABR30550.1"/>
    <property type="molecule type" value="Genomic_DNA"/>
</dbReference>
<dbReference type="RefSeq" id="WP_012056911.1">
    <property type="nucleotide sequence ID" value="NC_009616.1"/>
</dbReference>
<dbReference type="SMR" id="A6LKU9"/>
<dbReference type="STRING" id="391009.Tmel_0686"/>
<dbReference type="KEGG" id="tme:Tmel_0686"/>
<dbReference type="eggNOG" id="COG0112">
    <property type="taxonomic scope" value="Bacteria"/>
</dbReference>
<dbReference type="HOGENOM" id="CLU_022477_2_1_0"/>
<dbReference type="OrthoDB" id="9803846at2"/>
<dbReference type="UniPathway" id="UPA00193"/>
<dbReference type="UniPathway" id="UPA00288">
    <property type="reaction ID" value="UER01023"/>
</dbReference>
<dbReference type="Proteomes" id="UP000001110">
    <property type="component" value="Chromosome"/>
</dbReference>
<dbReference type="GO" id="GO:0005829">
    <property type="term" value="C:cytosol"/>
    <property type="evidence" value="ECO:0007669"/>
    <property type="project" value="TreeGrafter"/>
</dbReference>
<dbReference type="GO" id="GO:0004372">
    <property type="term" value="F:glycine hydroxymethyltransferase activity"/>
    <property type="evidence" value="ECO:0007669"/>
    <property type="project" value="UniProtKB-UniRule"/>
</dbReference>
<dbReference type="GO" id="GO:0030170">
    <property type="term" value="F:pyridoxal phosphate binding"/>
    <property type="evidence" value="ECO:0007669"/>
    <property type="project" value="UniProtKB-UniRule"/>
</dbReference>
<dbReference type="GO" id="GO:0019264">
    <property type="term" value="P:glycine biosynthetic process from serine"/>
    <property type="evidence" value="ECO:0007669"/>
    <property type="project" value="UniProtKB-UniRule"/>
</dbReference>
<dbReference type="GO" id="GO:0035999">
    <property type="term" value="P:tetrahydrofolate interconversion"/>
    <property type="evidence" value="ECO:0007669"/>
    <property type="project" value="UniProtKB-UniRule"/>
</dbReference>
<dbReference type="CDD" id="cd00378">
    <property type="entry name" value="SHMT"/>
    <property type="match status" value="1"/>
</dbReference>
<dbReference type="FunFam" id="3.40.640.10:FF:000001">
    <property type="entry name" value="Serine hydroxymethyltransferase"/>
    <property type="match status" value="1"/>
</dbReference>
<dbReference type="FunFam" id="3.90.1150.10:FF:000003">
    <property type="entry name" value="Serine hydroxymethyltransferase"/>
    <property type="match status" value="1"/>
</dbReference>
<dbReference type="Gene3D" id="3.90.1150.10">
    <property type="entry name" value="Aspartate Aminotransferase, domain 1"/>
    <property type="match status" value="1"/>
</dbReference>
<dbReference type="Gene3D" id="3.40.640.10">
    <property type="entry name" value="Type I PLP-dependent aspartate aminotransferase-like (Major domain)"/>
    <property type="match status" value="1"/>
</dbReference>
<dbReference type="HAMAP" id="MF_00051">
    <property type="entry name" value="SHMT"/>
    <property type="match status" value="1"/>
</dbReference>
<dbReference type="InterPro" id="IPR015424">
    <property type="entry name" value="PyrdxlP-dep_Trfase"/>
</dbReference>
<dbReference type="InterPro" id="IPR015421">
    <property type="entry name" value="PyrdxlP-dep_Trfase_major"/>
</dbReference>
<dbReference type="InterPro" id="IPR015422">
    <property type="entry name" value="PyrdxlP-dep_Trfase_small"/>
</dbReference>
<dbReference type="InterPro" id="IPR001085">
    <property type="entry name" value="Ser_HO-MeTrfase"/>
</dbReference>
<dbReference type="InterPro" id="IPR049943">
    <property type="entry name" value="Ser_HO-MeTrfase-like"/>
</dbReference>
<dbReference type="InterPro" id="IPR019798">
    <property type="entry name" value="Ser_HO-MeTrfase_PLP_BS"/>
</dbReference>
<dbReference type="InterPro" id="IPR039429">
    <property type="entry name" value="SHMT-like_dom"/>
</dbReference>
<dbReference type="NCBIfam" id="NF000586">
    <property type="entry name" value="PRK00011.1"/>
    <property type="match status" value="1"/>
</dbReference>
<dbReference type="PANTHER" id="PTHR11680">
    <property type="entry name" value="SERINE HYDROXYMETHYLTRANSFERASE"/>
    <property type="match status" value="1"/>
</dbReference>
<dbReference type="PANTHER" id="PTHR11680:SF35">
    <property type="entry name" value="SERINE HYDROXYMETHYLTRANSFERASE 1"/>
    <property type="match status" value="1"/>
</dbReference>
<dbReference type="Pfam" id="PF00464">
    <property type="entry name" value="SHMT"/>
    <property type="match status" value="1"/>
</dbReference>
<dbReference type="PIRSF" id="PIRSF000412">
    <property type="entry name" value="SHMT"/>
    <property type="match status" value="1"/>
</dbReference>
<dbReference type="SUPFAM" id="SSF53383">
    <property type="entry name" value="PLP-dependent transferases"/>
    <property type="match status" value="1"/>
</dbReference>
<dbReference type="PROSITE" id="PS00096">
    <property type="entry name" value="SHMT"/>
    <property type="match status" value="1"/>
</dbReference>
<keyword id="KW-0028">Amino-acid biosynthesis</keyword>
<keyword id="KW-0963">Cytoplasm</keyword>
<keyword id="KW-0554">One-carbon metabolism</keyword>
<keyword id="KW-0663">Pyridoxal phosphate</keyword>
<keyword id="KW-0808">Transferase</keyword>
<sequence>MWENVKKVDPEIYEVILKEWDRQEYGLELIASENFASLAVIEAMGSVLTNKYAEGYPGRRYYGGCEWVDVAEKLARDRAKELFNVKYANVQPHSGSQANMGAYFAVSEPGDTIMGMSLSHGGHLTHGAPVNFSGRIYNVVSYGVDSETEVINYDEVRELALKHKPKIIIAGGSAYSKIIDFKRFREIADEVGAYLIVDMAHFAGLVAAGIYPNPAEYAHIVTSTTHKTLRGPRGGMILTNDKELYKAINKSIFPGIQGGPLMHVIAAKAVCFKEALTDEFKAYQNQVVKNAKKLAEELEKRGLRIVSGGTDTHLMLVDLNPLNVTGKAAEIALGKCHVTVNKNTIPNETRSPFVASGIRLGTPALTTRGMKESEMEEIAELIVKVLENVKDEEGNVDDSIVEDVQKKVRDLCERFPLYEGKIRL</sequence>
<protein>
    <recommendedName>
        <fullName evidence="1">Serine hydroxymethyltransferase</fullName>
        <shortName evidence="1">SHMT</shortName>
        <shortName evidence="1">Serine methylase</shortName>
        <ecNumber evidence="1">2.1.2.1</ecNumber>
    </recommendedName>
</protein>
<gene>
    <name evidence="1" type="primary">glyA</name>
    <name type="ordered locus">Tmel_0686</name>
</gene>
<feature type="chain" id="PRO_1000006340" description="Serine hydroxymethyltransferase">
    <location>
        <begin position="1"/>
        <end position="424"/>
    </location>
</feature>
<feature type="binding site" evidence="1">
    <location>
        <position position="118"/>
    </location>
    <ligand>
        <name>(6S)-5,6,7,8-tetrahydrofolate</name>
        <dbReference type="ChEBI" id="CHEBI:57453"/>
    </ligand>
</feature>
<feature type="binding site" evidence="1">
    <location>
        <begin position="122"/>
        <end position="124"/>
    </location>
    <ligand>
        <name>(6S)-5,6,7,8-tetrahydrofolate</name>
        <dbReference type="ChEBI" id="CHEBI:57453"/>
    </ligand>
</feature>
<feature type="binding site" evidence="1">
    <location>
        <begin position="351"/>
        <end position="353"/>
    </location>
    <ligand>
        <name>(6S)-5,6,7,8-tetrahydrofolate</name>
        <dbReference type="ChEBI" id="CHEBI:57453"/>
    </ligand>
</feature>
<feature type="site" description="Plays an important role in substrate specificity" evidence="1">
    <location>
        <position position="226"/>
    </location>
</feature>
<feature type="modified residue" description="N6-(pyridoxal phosphate)lysine" evidence="1">
    <location>
        <position position="227"/>
    </location>
</feature>
<accession>A6LKU9</accession>
<proteinExistence type="inferred from homology"/>
<comment type="function">
    <text evidence="1">Catalyzes the reversible interconversion of serine and glycine with tetrahydrofolate (THF) serving as the one-carbon carrier. This reaction serves as the major source of one-carbon groups required for the biosynthesis of purines, thymidylate, methionine, and other important biomolecules. Also exhibits THF-independent aldolase activity toward beta-hydroxyamino acids, producing glycine and aldehydes, via a retro-aldol mechanism.</text>
</comment>
<comment type="catalytic activity">
    <reaction evidence="1">
        <text>(6R)-5,10-methylene-5,6,7,8-tetrahydrofolate + glycine + H2O = (6S)-5,6,7,8-tetrahydrofolate + L-serine</text>
        <dbReference type="Rhea" id="RHEA:15481"/>
        <dbReference type="ChEBI" id="CHEBI:15377"/>
        <dbReference type="ChEBI" id="CHEBI:15636"/>
        <dbReference type="ChEBI" id="CHEBI:33384"/>
        <dbReference type="ChEBI" id="CHEBI:57305"/>
        <dbReference type="ChEBI" id="CHEBI:57453"/>
        <dbReference type="EC" id="2.1.2.1"/>
    </reaction>
</comment>
<comment type="cofactor">
    <cofactor evidence="1">
        <name>pyridoxal 5'-phosphate</name>
        <dbReference type="ChEBI" id="CHEBI:597326"/>
    </cofactor>
</comment>
<comment type="pathway">
    <text evidence="1">One-carbon metabolism; tetrahydrofolate interconversion.</text>
</comment>
<comment type="pathway">
    <text evidence="1">Amino-acid biosynthesis; glycine biosynthesis; glycine from L-serine: step 1/1.</text>
</comment>
<comment type="subunit">
    <text evidence="1">Homodimer.</text>
</comment>
<comment type="subcellular location">
    <subcellularLocation>
        <location evidence="1">Cytoplasm</location>
    </subcellularLocation>
</comment>
<comment type="similarity">
    <text evidence="1">Belongs to the SHMT family.</text>
</comment>
<organism>
    <name type="scientific">Thermosipho melanesiensis (strain DSM 12029 / CIP 104789 / BI429)</name>
    <dbReference type="NCBI Taxonomy" id="391009"/>
    <lineage>
        <taxon>Bacteria</taxon>
        <taxon>Thermotogati</taxon>
        <taxon>Thermotogota</taxon>
        <taxon>Thermotogae</taxon>
        <taxon>Thermotogales</taxon>
        <taxon>Fervidobacteriaceae</taxon>
        <taxon>Thermosipho</taxon>
    </lineage>
</organism>
<reference key="1">
    <citation type="submission" date="2007-05" db="EMBL/GenBank/DDBJ databases">
        <title>Complete sequence of Thermosipho melanesiensis BI429.</title>
        <authorList>
            <consortium name="US DOE Joint Genome Institute"/>
            <person name="Copeland A."/>
            <person name="Lucas S."/>
            <person name="Lapidus A."/>
            <person name="Barry K."/>
            <person name="Glavina del Rio T."/>
            <person name="Dalin E."/>
            <person name="Tice H."/>
            <person name="Pitluck S."/>
            <person name="Chertkov O."/>
            <person name="Brettin T."/>
            <person name="Bruce D."/>
            <person name="Detter J.C."/>
            <person name="Han C."/>
            <person name="Schmutz J."/>
            <person name="Larimer F."/>
            <person name="Land M."/>
            <person name="Hauser L."/>
            <person name="Kyrpides N."/>
            <person name="Mikhailova N."/>
            <person name="Nelson K."/>
            <person name="Gogarten J.P."/>
            <person name="Noll K."/>
            <person name="Richardson P."/>
        </authorList>
    </citation>
    <scope>NUCLEOTIDE SEQUENCE [LARGE SCALE GENOMIC DNA]</scope>
    <source>
        <strain>DSM 12029 / CIP 104789 / BI429</strain>
    </source>
</reference>
<name>GLYA_THEM4</name>
<evidence type="ECO:0000255" key="1">
    <source>
        <dbReference type="HAMAP-Rule" id="MF_00051"/>
    </source>
</evidence>